<protein>
    <recommendedName>
        <fullName evidence="1">Flagellar brake protein YcgR</fullName>
    </recommendedName>
    <alternativeName>
        <fullName evidence="1">Cyclic di-GMP binding protein YcgR</fullName>
    </alternativeName>
</protein>
<sequence>MAILQTFSEQTISSARASDIKEPDYSVNSRPEICFFLNGIMEEKSLISLYLARDSHSAILSSILAVDPQQKLLIMDYGINETLNQIALKRGYLRCITSHNQIRIEFDCDNLQRVQFEGRHAFSADIPESLKRLQRRNFYRVTTSITNPAVCTIPLLRAADEAPVVYSLLDISCGGMALIDQPDADTLLKAGTTLEHCRIDLPGDGNLFSSIEASIQIAYVGTVILNNGNTCPRIGCEFINLPEKSRLLIQRYITKLEQQARKLETESGF</sequence>
<keyword id="KW-0975">Bacterial flagellum</keyword>
<keyword id="KW-0973">c-di-GMP</keyword>
<keyword id="KW-0547">Nucleotide-binding</keyword>
<comment type="function">
    <text evidence="1">Acts as a flagellar brake, regulating swimming and swarming in a bis-(3'-5') cyclic diguanylic acid (c-di-GMP)-dependent manner. Binds 1 c-di-GMP dimer per subunit. Increasing levels of c-di-GMP lead to decreased motility.</text>
</comment>
<comment type="subunit">
    <text evidence="1">Monomer. Interacts with the flagellar basal bodies.</text>
</comment>
<comment type="subcellular location">
    <subcellularLocation>
        <location evidence="1">Bacterial flagellum basal body</location>
    </subcellularLocation>
</comment>
<comment type="similarity">
    <text evidence="1">Belongs to the YcgR family.</text>
</comment>
<proteinExistence type="inferred from homology"/>
<accession>Q0AI13</accession>
<gene>
    <name evidence="1" type="primary">ycgR</name>
    <name type="ordered locus">Neut_0749</name>
</gene>
<evidence type="ECO:0000255" key="1">
    <source>
        <dbReference type="HAMAP-Rule" id="MF_01457"/>
    </source>
</evidence>
<organism>
    <name type="scientific">Nitrosomonas eutropha (strain DSM 101675 / C91 / Nm57)</name>
    <dbReference type="NCBI Taxonomy" id="335283"/>
    <lineage>
        <taxon>Bacteria</taxon>
        <taxon>Pseudomonadati</taxon>
        <taxon>Pseudomonadota</taxon>
        <taxon>Betaproteobacteria</taxon>
        <taxon>Nitrosomonadales</taxon>
        <taxon>Nitrosomonadaceae</taxon>
        <taxon>Nitrosomonas</taxon>
    </lineage>
</organism>
<name>YCGR_NITEC</name>
<reference key="1">
    <citation type="journal article" date="2007" name="Environ. Microbiol.">
        <title>Whole-genome analysis of the ammonia-oxidizing bacterium, Nitrosomonas eutropha C91: implications for niche adaptation.</title>
        <authorList>
            <person name="Stein L.Y."/>
            <person name="Arp D.J."/>
            <person name="Berube P.M."/>
            <person name="Chain P.S."/>
            <person name="Hauser L."/>
            <person name="Jetten M.S."/>
            <person name="Klotz M.G."/>
            <person name="Larimer F.W."/>
            <person name="Norton J.M."/>
            <person name="Op den Camp H.J.M."/>
            <person name="Shin M."/>
            <person name="Wei X."/>
        </authorList>
    </citation>
    <scope>NUCLEOTIDE SEQUENCE [LARGE SCALE GENOMIC DNA]</scope>
    <source>
        <strain>DSM 101675 / C91 / Nm57</strain>
    </source>
</reference>
<feature type="chain" id="PRO_0000395279" description="Flagellar brake protein YcgR">
    <location>
        <begin position="1"/>
        <end position="269"/>
    </location>
</feature>
<feature type="domain" description="PilZ" evidence="1">
    <location>
        <begin position="134"/>
        <end position="254"/>
    </location>
</feature>
<dbReference type="EMBL" id="CP000450">
    <property type="protein sequence ID" value="ABI59019.1"/>
    <property type="molecule type" value="Genomic_DNA"/>
</dbReference>
<dbReference type="RefSeq" id="WP_011633844.1">
    <property type="nucleotide sequence ID" value="NC_008344.1"/>
</dbReference>
<dbReference type="SMR" id="Q0AI13"/>
<dbReference type="STRING" id="335283.Neut_0749"/>
<dbReference type="KEGG" id="net:Neut_0749"/>
<dbReference type="eggNOG" id="COG5581">
    <property type="taxonomic scope" value="Bacteria"/>
</dbReference>
<dbReference type="HOGENOM" id="CLU_086025_0_0_4"/>
<dbReference type="OrthoDB" id="5572581at2"/>
<dbReference type="Proteomes" id="UP000001966">
    <property type="component" value="Chromosome"/>
</dbReference>
<dbReference type="GO" id="GO:0009425">
    <property type="term" value="C:bacterial-type flagellum basal body"/>
    <property type="evidence" value="ECO:0007669"/>
    <property type="project" value="UniProtKB-SubCell"/>
</dbReference>
<dbReference type="GO" id="GO:0035438">
    <property type="term" value="F:cyclic-di-GMP binding"/>
    <property type="evidence" value="ECO:0007669"/>
    <property type="project" value="UniProtKB-UniRule"/>
</dbReference>
<dbReference type="GO" id="GO:0071973">
    <property type="term" value="P:bacterial-type flagellum-dependent cell motility"/>
    <property type="evidence" value="ECO:0007669"/>
    <property type="project" value="UniProtKB-UniRule"/>
</dbReference>
<dbReference type="GO" id="GO:0071945">
    <property type="term" value="P:regulation of bacterial-type flagellum-dependent cell motility by regulation of motor speed"/>
    <property type="evidence" value="ECO:0007669"/>
    <property type="project" value="UniProtKB-UniRule"/>
</dbReference>
<dbReference type="Gene3D" id="2.30.110.10">
    <property type="entry name" value="Electron Transport, Fmn-binding Protein, Chain A"/>
    <property type="match status" value="1"/>
</dbReference>
<dbReference type="Gene3D" id="2.40.10.220">
    <property type="entry name" value="predicted glycosyltransferase like domains"/>
    <property type="match status" value="1"/>
</dbReference>
<dbReference type="HAMAP" id="MF_01457">
    <property type="entry name" value="YcgR"/>
    <property type="match status" value="1"/>
</dbReference>
<dbReference type="InterPro" id="IPR009875">
    <property type="entry name" value="PilZ_domain"/>
</dbReference>
<dbReference type="InterPro" id="IPR012349">
    <property type="entry name" value="Split_barrel_FMN-bd"/>
</dbReference>
<dbReference type="InterPro" id="IPR023787">
    <property type="entry name" value="T3SS_YcgR"/>
</dbReference>
<dbReference type="InterPro" id="IPR009926">
    <property type="entry name" value="T3SS_YcgR_PilZN"/>
</dbReference>
<dbReference type="Pfam" id="PF07238">
    <property type="entry name" value="PilZ"/>
    <property type="match status" value="1"/>
</dbReference>
<dbReference type="Pfam" id="PF07317">
    <property type="entry name" value="PilZN"/>
    <property type="match status" value="1"/>
</dbReference>